<keyword id="KW-0028">Amino-acid biosynthesis</keyword>
<keyword id="KW-0057">Aromatic amino acid biosynthesis</keyword>
<keyword id="KW-0456">Lyase</keyword>
<keyword id="KW-1185">Reference proteome</keyword>
<keyword id="KW-0704">Schiff base</keyword>
<protein>
    <recommendedName>
        <fullName evidence="1">3-dehydroquinate dehydratase</fullName>
        <shortName evidence="1">3-dehydroquinase</shortName>
        <ecNumber evidence="1">4.2.1.10</ecNumber>
    </recommendedName>
    <alternativeName>
        <fullName evidence="1">Type I DHQase</fullName>
    </alternativeName>
    <alternativeName>
        <fullName evidence="1">Type I dehydroquinase</fullName>
        <shortName evidence="1">DHQ1</shortName>
    </alternativeName>
</protein>
<reference key="1">
    <citation type="journal article" date="2001" name="Science">
        <title>Comparative genomics of Listeria species.</title>
        <authorList>
            <person name="Glaser P."/>
            <person name="Frangeul L."/>
            <person name="Buchrieser C."/>
            <person name="Rusniok C."/>
            <person name="Amend A."/>
            <person name="Baquero F."/>
            <person name="Berche P."/>
            <person name="Bloecker H."/>
            <person name="Brandt P."/>
            <person name="Chakraborty T."/>
            <person name="Charbit A."/>
            <person name="Chetouani F."/>
            <person name="Couve E."/>
            <person name="de Daruvar A."/>
            <person name="Dehoux P."/>
            <person name="Domann E."/>
            <person name="Dominguez-Bernal G."/>
            <person name="Duchaud E."/>
            <person name="Durant L."/>
            <person name="Dussurget O."/>
            <person name="Entian K.-D."/>
            <person name="Fsihi H."/>
            <person name="Garcia-del Portillo F."/>
            <person name="Garrido P."/>
            <person name="Gautier L."/>
            <person name="Goebel W."/>
            <person name="Gomez-Lopez N."/>
            <person name="Hain T."/>
            <person name="Hauf J."/>
            <person name="Jackson D."/>
            <person name="Jones L.-M."/>
            <person name="Kaerst U."/>
            <person name="Kreft J."/>
            <person name="Kuhn M."/>
            <person name="Kunst F."/>
            <person name="Kurapkat G."/>
            <person name="Madueno E."/>
            <person name="Maitournam A."/>
            <person name="Mata Vicente J."/>
            <person name="Ng E."/>
            <person name="Nedjari H."/>
            <person name="Nordsiek G."/>
            <person name="Novella S."/>
            <person name="de Pablos B."/>
            <person name="Perez-Diaz J.-C."/>
            <person name="Purcell R."/>
            <person name="Remmel B."/>
            <person name="Rose M."/>
            <person name="Schlueter T."/>
            <person name="Simoes N."/>
            <person name="Tierrez A."/>
            <person name="Vazquez-Boland J.-A."/>
            <person name="Voss H."/>
            <person name="Wehland J."/>
            <person name="Cossart P."/>
        </authorList>
    </citation>
    <scope>NUCLEOTIDE SEQUENCE [LARGE SCALE GENOMIC DNA]</scope>
    <source>
        <strain>ATCC BAA-679 / EGD-e</strain>
    </source>
</reference>
<feature type="chain" id="PRO_0000138801" description="3-dehydroquinate dehydratase">
    <location>
        <begin position="1"/>
        <end position="252"/>
    </location>
</feature>
<feature type="active site" description="Proton donor/acceptor" evidence="1">
    <location>
        <position position="143"/>
    </location>
</feature>
<feature type="active site" description="Schiff-base intermediate with substrate" evidence="1">
    <location>
        <position position="170"/>
    </location>
</feature>
<feature type="binding site" evidence="1">
    <location>
        <begin position="46"/>
        <end position="48"/>
    </location>
    <ligand>
        <name>3-dehydroquinate</name>
        <dbReference type="ChEBI" id="CHEBI:32364"/>
    </ligand>
</feature>
<feature type="binding site" evidence="1">
    <location>
        <position position="82"/>
    </location>
    <ligand>
        <name>3-dehydroquinate</name>
        <dbReference type="ChEBI" id="CHEBI:32364"/>
    </ligand>
</feature>
<feature type="binding site" evidence="1">
    <location>
        <position position="212"/>
    </location>
    <ligand>
        <name>3-dehydroquinate</name>
        <dbReference type="ChEBI" id="CHEBI:32364"/>
    </ligand>
</feature>
<feature type="binding site" evidence="1">
    <location>
        <position position="231"/>
    </location>
    <ligand>
        <name>3-dehydroquinate</name>
        <dbReference type="ChEBI" id="CHEBI:32364"/>
    </ligand>
</feature>
<feature type="binding site" evidence="1">
    <location>
        <position position="235"/>
    </location>
    <ligand>
        <name>3-dehydroquinate</name>
        <dbReference type="ChEBI" id="CHEBI:32364"/>
    </ligand>
</feature>
<organism>
    <name type="scientific">Listeria monocytogenes serovar 1/2a (strain ATCC BAA-679 / EGD-e)</name>
    <dbReference type="NCBI Taxonomy" id="169963"/>
    <lineage>
        <taxon>Bacteria</taxon>
        <taxon>Bacillati</taxon>
        <taxon>Bacillota</taxon>
        <taxon>Bacilli</taxon>
        <taxon>Bacillales</taxon>
        <taxon>Listeriaceae</taxon>
        <taxon>Listeria</taxon>
    </lineage>
</organism>
<sequence>MNKVVVKNVTFGEGAPKICVPMVGKTVAALKEEAEMLQTIDLDVVEWRVDFFEDVKDLAKVEAALGEIRAILPETPILFTFRSAKEGGELAVSDEFYFELNETLAGTGKIDLVDVELFNEEADVLRLIETAHKNNVKVVMSNHDFDKTPAKEEIVSRLTRMEALGADLPKIAVMPKSAGDVLTLLDATNTVFEKANQPIITMSMAGTGVISRLAGEVFGSAMTFGAAKKASAPGQIDVNELRHVLDLLHKQF</sequence>
<accession>Q8Y9N4</accession>
<dbReference type="EC" id="4.2.1.10" evidence="1"/>
<dbReference type="EMBL" id="AL591975">
    <property type="protein sequence ID" value="CAC98570.1"/>
    <property type="molecule type" value="Genomic_DNA"/>
</dbReference>
<dbReference type="PIR" id="AD1136">
    <property type="entry name" value="AD1136"/>
</dbReference>
<dbReference type="RefSeq" id="NP_464019.1">
    <property type="nucleotide sequence ID" value="NC_003210.1"/>
</dbReference>
<dbReference type="RefSeq" id="WP_003721277.1">
    <property type="nucleotide sequence ID" value="NZ_CP149495.1"/>
</dbReference>
<dbReference type="SMR" id="Q8Y9N4"/>
<dbReference type="STRING" id="169963.gene:17593142"/>
<dbReference type="PaxDb" id="169963-lmo0491"/>
<dbReference type="EnsemblBacteria" id="CAC98570">
    <property type="protein sequence ID" value="CAC98570"/>
    <property type="gene ID" value="CAC98570"/>
</dbReference>
<dbReference type="GeneID" id="985226"/>
<dbReference type="KEGG" id="lmo:lmo0491"/>
<dbReference type="PATRIC" id="fig|169963.11.peg.510"/>
<dbReference type="eggNOG" id="COG0710">
    <property type="taxonomic scope" value="Bacteria"/>
</dbReference>
<dbReference type="HOGENOM" id="CLU_064444_0_0_9"/>
<dbReference type="OrthoDB" id="9813659at2"/>
<dbReference type="PhylomeDB" id="Q8Y9N4"/>
<dbReference type="BioCyc" id="LMON169963:LMO0491-MONOMER"/>
<dbReference type="UniPathway" id="UPA00053">
    <property type="reaction ID" value="UER00086"/>
</dbReference>
<dbReference type="Proteomes" id="UP000000817">
    <property type="component" value="Chromosome"/>
</dbReference>
<dbReference type="GO" id="GO:0003855">
    <property type="term" value="F:3-dehydroquinate dehydratase activity"/>
    <property type="evidence" value="ECO:0000318"/>
    <property type="project" value="GO_Central"/>
</dbReference>
<dbReference type="GO" id="GO:0046279">
    <property type="term" value="P:3,4-dihydroxybenzoate biosynthetic process"/>
    <property type="evidence" value="ECO:0000318"/>
    <property type="project" value="GO_Central"/>
</dbReference>
<dbReference type="GO" id="GO:0008652">
    <property type="term" value="P:amino acid biosynthetic process"/>
    <property type="evidence" value="ECO:0007669"/>
    <property type="project" value="UniProtKB-KW"/>
</dbReference>
<dbReference type="GO" id="GO:0009073">
    <property type="term" value="P:aromatic amino acid family biosynthetic process"/>
    <property type="evidence" value="ECO:0007669"/>
    <property type="project" value="UniProtKB-KW"/>
</dbReference>
<dbReference type="GO" id="GO:0009423">
    <property type="term" value="P:chorismate biosynthetic process"/>
    <property type="evidence" value="ECO:0007669"/>
    <property type="project" value="UniProtKB-UniRule"/>
</dbReference>
<dbReference type="CDD" id="cd00502">
    <property type="entry name" value="DHQase_I"/>
    <property type="match status" value="1"/>
</dbReference>
<dbReference type="FunFam" id="3.20.20.70:FF:000047">
    <property type="entry name" value="3-dehydroquinate dehydratase"/>
    <property type="match status" value="1"/>
</dbReference>
<dbReference type="Gene3D" id="3.20.20.70">
    <property type="entry name" value="Aldolase class I"/>
    <property type="match status" value="1"/>
</dbReference>
<dbReference type="HAMAP" id="MF_00214">
    <property type="entry name" value="AroD"/>
    <property type="match status" value="1"/>
</dbReference>
<dbReference type="InterPro" id="IPR018508">
    <property type="entry name" value="3-dehydroquinate_DH_AS"/>
</dbReference>
<dbReference type="InterPro" id="IPR013785">
    <property type="entry name" value="Aldolase_TIM"/>
</dbReference>
<dbReference type="InterPro" id="IPR001381">
    <property type="entry name" value="DHquinase_I"/>
</dbReference>
<dbReference type="InterPro" id="IPR050146">
    <property type="entry name" value="Type-I_3-dehydroquinase"/>
</dbReference>
<dbReference type="NCBIfam" id="TIGR01093">
    <property type="entry name" value="aroD"/>
    <property type="match status" value="1"/>
</dbReference>
<dbReference type="PANTHER" id="PTHR43699">
    <property type="entry name" value="3-DEHYDROQUINATE DEHYDRATASE"/>
    <property type="match status" value="1"/>
</dbReference>
<dbReference type="PANTHER" id="PTHR43699:SF1">
    <property type="entry name" value="3-DEHYDROQUINATE DEHYDRATASE"/>
    <property type="match status" value="1"/>
</dbReference>
<dbReference type="Pfam" id="PF01487">
    <property type="entry name" value="DHquinase_I"/>
    <property type="match status" value="1"/>
</dbReference>
<dbReference type="SUPFAM" id="SSF51569">
    <property type="entry name" value="Aldolase"/>
    <property type="match status" value="1"/>
</dbReference>
<dbReference type="PROSITE" id="PS01028">
    <property type="entry name" value="DEHYDROQUINASE_I"/>
    <property type="match status" value="1"/>
</dbReference>
<name>AROD_LISMO</name>
<comment type="function">
    <text evidence="1">Involved in the third step of the chorismate pathway, which leads to the biosynthesis of aromatic amino acids. Catalyzes the cis-dehydration of 3-dehydroquinate (DHQ) and introduces the first double bond of the aromatic ring to yield 3-dehydroshikimate.</text>
</comment>
<comment type="catalytic activity">
    <reaction evidence="1">
        <text>3-dehydroquinate = 3-dehydroshikimate + H2O</text>
        <dbReference type="Rhea" id="RHEA:21096"/>
        <dbReference type="ChEBI" id="CHEBI:15377"/>
        <dbReference type="ChEBI" id="CHEBI:16630"/>
        <dbReference type="ChEBI" id="CHEBI:32364"/>
        <dbReference type="EC" id="4.2.1.10"/>
    </reaction>
</comment>
<comment type="pathway">
    <text evidence="1">Metabolic intermediate biosynthesis; chorismate biosynthesis; chorismate from D-erythrose 4-phosphate and phosphoenolpyruvate: step 3/7.</text>
</comment>
<comment type="subunit">
    <text evidence="1">Homodimer.</text>
</comment>
<comment type="similarity">
    <text evidence="1">Belongs to the type-I 3-dehydroquinase family.</text>
</comment>
<proteinExistence type="inferred from homology"/>
<gene>
    <name evidence="1" type="primary">aroD</name>
    <name type="ordered locus">lmo0491</name>
</gene>
<evidence type="ECO:0000255" key="1">
    <source>
        <dbReference type="HAMAP-Rule" id="MF_00214"/>
    </source>
</evidence>